<dbReference type="EMBL" id="AE003849">
    <property type="protein sequence ID" value="AAF85258.1"/>
    <property type="molecule type" value="Genomic_DNA"/>
</dbReference>
<dbReference type="PIR" id="G82555">
    <property type="entry name" value="G82555"/>
</dbReference>
<dbReference type="SMR" id="Q9PAN6"/>
<dbReference type="STRING" id="160492.XF_2459"/>
<dbReference type="KEGG" id="xfa:XF_2459"/>
<dbReference type="eggNOG" id="COG2332">
    <property type="taxonomic scope" value="Bacteria"/>
</dbReference>
<dbReference type="HOGENOM" id="CLU_079503_1_1_6"/>
<dbReference type="Proteomes" id="UP000000812">
    <property type="component" value="Chromosome"/>
</dbReference>
<dbReference type="GO" id="GO:0005886">
    <property type="term" value="C:plasma membrane"/>
    <property type="evidence" value="ECO:0007669"/>
    <property type="project" value="UniProtKB-SubCell"/>
</dbReference>
<dbReference type="GO" id="GO:0020037">
    <property type="term" value="F:heme binding"/>
    <property type="evidence" value="ECO:0007669"/>
    <property type="project" value="InterPro"/>
</dbReference>
<dbReference type="GO" id="GO:0046872">
    <property type="term" value="F:metal ion binding"/>
    <property type="evidence" value="ECO:0007669"/>
    <property type="project" value="UniProtKB-KW"/>
</dbReference>
<dbReference type="GO" id="GO:0017004">
    <property type="term" value="P:cytochrome complex assembly"/>
    <property type="evidence" value="ECO:0007669"/>
    <property type="project" value="UniProtKB-KW"/>
</dbReference>
<dbReference type="Gene3D" id="2.40.50.140">
    <property type="entry name" value="Nucleic acid-binding proteins"/>
    <property type="match status" value="1"/>
</dbReference>
<dbReference type="HAMAP" id="MF_01959">
    <property type="entry name" value="CcmE"/>
    <property type="match status" value="1"/>
</dbReference>
<dbReference type="InterPro" id="IPR004329">
    <property type="entry name" value="CcmE"/>
</dbReference>
<dbReference type="InterPro" id="IPR036127">
    <property type="entry name" value="CcmE-like_sf"/>
</dbReference>
<dbReference type="InterPro" id="IPR012340">
    <property type="entry name" value="NA-bd_OB-fold"/>
</dbReference>
<dbReference type="NCBIfam" id="NF009727">
    <property type="entry name" value="PRK13254.1-1"/>
    <property type="match status" value="1"/>
</dbReference>
<dbReference type="NCBIfam" id="NF009728">
    <property type="entry name" value="PRK13254.1-2"/>
    <property type="match status" value="1"/>
</dbReference>
<dbReference type="PANTHER" id="PTHR34128">
    <property type="entry name" value="CYTOCHROME C-TYPE BIOGENESIS PROTEIN CCME HOMOLOG, MITOCHONDRIAL"/>
    <property type="match status" value="1"/>
</dbReference>
<dbReference type="PANTHER" id="PTHR34128:SF2">
    <property type="entry name" value="CYTOCHROME C-TYPE BIOGENESIS PROTEIN CCME HOMOLOG, MITOCHONDRIAL"/>
    <property type="match status" value="1"/>
</dbReference>
<dbReference type="Pfam" id="PF03100">
    <property type="entry name" value="CcmE"/>
    <property type="match status" value="1"/>
</dbReference>
<dbReference type="SUPFAM" id="SSF82093">
    <property type="entry name" value="Heme chaperone CcmE"/>
    <property type="match status" value="1"/>
</dbReference>
<accession>Q9PAN6</accession>
<keyword id="KW-0997">Cell inner membrane</keyword>
<keyword id="KW-1003">Cell membrane</keyword>
<keyword id="KW-0201">Cytochrome c-type biogenesis</keyword>
<keyword id="KW-0349">Heme</keyword>
<keyword id="KW-0408">Iron</keyword>
<keyword id="KW-0472">Membrane</keyword>
<keyword id="KW-0479">Metal-binding</keyword>
<keyword id="KW-0735">Signal-anchor</keyword>
<keyword id="KW-0812">Transmembrane</keyword>
<keyword id="KW-1133">Transmembrane helix</keyword>
<gene>
    <name evidence="1" type="primary">ccmE</name>
    <name evidence="1" type="synonym">cycJ</name>
    <name type="ordered locus">XF_2459</name>
</gene>
<protein>
    <recommendedName>
        <fullName evidence="1">Cytochrome c-type biogenesis protein CcmE</fullName>
    </recommendedName>
    <alternativeName>
        <fullName evidence="1">Cytochrome c maturation protein E</fullName>
    </alternativeName>
    <alternativeName>
        <fullName evidence="1">Heme chaperone CcmE</fullName>
    </alternativeName>
</protein>
<reference key="1">
    <citation type="journal article" date="2000" name="Nature">
        <title>The genome sequence of the plant pathogen Xylella fastidiosa.</title>
        <authorList>
            <person name="Simpson A.J.G."/>
            <person name="Reinach F.C."/>
            <person name="Arruda P."/>
            <person name="Abreu F.A."/>
            <person name="Acencio M."/>
            <person name="Alvarenga R."/>
            <person name="Alves L.M.C."/>
            <person name="Araya J.E."/>
            <person name="Baia G.S."/>
            <person name="Baptista C.S."/>
            <person name="Barros M.H."/>
            <person name="Bonaccorsi E.D."/>
            <person name="Bordin S."/>
            <person name="Bove J.M."/>
            <person name="Briones M.R.S."/>
            <person name="Bueno M.R.P."/>
            <person name="Camargo A.A."/>
            <person name="Camargo L.E.A."/>
            <person name="Carraro D.M."/>
            <person name="Carrer H."/>
            <person name="Colauto N.B."/>
            <person name="Colombo C."/>
            <person name="Costa F.F."/>
            <person name="Costa M.C.R."/>
            <person name="Costa-Neto C.M."/>
            <person name="Coutinho L.L."/>
            <person name="Cristofani M."/>
            <person name="Dias-Neto E."/>
            <person name="Docena C."/>
            <person name="El-Dorry H."/>
            <person name="Facincani A.P."/>
            <person name="Ferreira A.J.S."/>
            <person name="Ferreira V.C.A."/>
            <person name="Ferro J.A."/>
            <person name="Fraga J.S."/>
            <person name="Franca S.C."/>
            <person name="Franco M.C."/>
            <person name="Frohme M."/>
            <person name="Furlan L.R."/>
            <person name="Garnier M."/>
            <person name="Goldman G.H."/>
            <person name="Goldman M.H.S."/>
            <person name="Gomes S.L."/>
            <person name="Gruber A."/>
            <person name="Ho P.L."/>
            <person name="Hoheisel J.D."/>
            <person name="Junqueira M.L."/>
            <person name="Kemper E.L."/>
            <person name="Kitajima J.P."/>
            <person name="Krieger J.E."/>
            <person name="Kuramae E.E."/>
            <person name="Laigret F."/>
            <person name="Lambais M.R."/>
            <person name="Leite L.C.C."/>
            <person name="Lemos E.G.M."/>
            <person name="Lemos M.V.F."/>
            <person name="Lopes S.A."/>
            <person name="Lopes C.R."/>
            <person name="Machado J.A."/>
            <person name="Machado M.A."/>
            <person name="Madeira A.M.B.N."/>
            <person name="Madeira H.M.F."/>
            <person name="Marino C.L."/>
            <person name="Marques M.V."/>
            <person name="Martins E.A.L."/>
            <person name="Martins E.M.F."/>
            <person name="Matsukuma A.Y."/>
            <person name="Menck C.F.M."/>
            <person name="Miracca E.C."/>
            <person name="Miyaki C.Y."/>
            <person name="Monteiro-Vitorello C.B."/>
            <person name="Moon D.H."/>
            <person name="Nagai M.A."/>
            <person name="Nascimento A.L.T.O."/>
            <person name="Netto L.E.S."/>
            <person name="Nhani A. Jr."/>
            <person name="Nobrega F.G."/>
            <person name="Nunes L.R."/>
            <person name="Oliveira M.A."/>
            <person name="de Oliveira M.C."/>
            <person name="de Oliveira R.C."/>
            <person name="Palmieri D.A."/>
            <person name="Paris A."/>
            <person name="Peixoto B.R."/>
            <person name="Pereira G.A.G."/>
            <person name="Pereira H.A. Jr."/>
            <person name="Pesquero J.B."/>
            <person name="Quaggio R.B."/>
            <person name="Roberto P.G."/>
            <person name="Rodrigues V."/>
            <person name="de Rosa A.J.M."/>
            <person name="de Rosa V.E. Jr."/>
            <person name="de Sa R.G."/>
            <person name="Santelli R.V."/>
            <person name="Sawasaki H.E."/>
            <person name="da Silva A.C.R."/>
            <person name="da Silva A.M."/>
            <person name="da Silva F.R."/>
            <person name="Silva W.A. Jr."/>
            <person name="da Silveira J.F."/>
            <person name="Silvestri M.L.Z."/>
            <person name="Siqueira W.J."/>
            <person name="de Souza A.A."/>
            <person name="de Souza A.P."/>
            <person name="Terenzi M.F."/>
            <person name="Truffi D."/>
            <person name="Tsai S.M."/>
            <person name="Tsuhako M.H."/>
            <person name="Vallada H."/>
            <person name="Van Sluys M.A."/>
            <person name="Verjovski-Almeida S."/>
            <person name="Vettore A.L."/>
            <person name="Zago M.A."/>
            <person name="Zatz M."/>
            <person name="Meidanis J."/>
            <person name="Setubal J.C."/>
        </authorList>
    </citation>
    <scope>NUCLEOTIDE SEQUENCE [LARGE SCALE GENOMIC DNA]</scope>
    <source>
        <strain>9a5c</strain>
    </source>
</reference>
<name>CCME_XYLFA</name>
<evidence type="ECO:0000255" key="1">
    <source>
        <dbReference type="HAMAP-Rule" id="MF_01959"/>
    </source>
</evidence>
<evidence type="ECO:0000256" key="2">
    <source>
        <dbReference type="SAM" id="MobiDB-lite"/>
    </source>
</evidence>
<sequence>MNARRRLWSLLMLILAVGTAATLTIMALRRNLTYLYMPSEVLRGDTAQQTHFRLGGIVEKGSFQRTSGTLHTRFIVTDGNARLQVRYARILPDLFREGQAVVATGQMQHGIFIAENILARHNETYTPRTLTNKMQPTPTQHTHLDTPIAQTTP</sequence>
<feature type="chain" id="PRO_0000238891" description="Cytochrome c-type biogenesis protein CcmE">
    <location>
        <begin position="1"/>
        <end position="153"/>
    </location>
</feature>
<feature type="topological domain" description="Cytoplasmic" evidence="1">
    <location>
        <begin position="1"/>
        <end position="6"/>
    </location>
</feature>
<feature type="transmembrane region" description="Helical; Signal-anchor for type II membrane protein" evidence="1">
    <location>
        <begin position="7"/>
        <end position="27"/>
    </location>
</feature>
<feature type="topological domain" description="Periplasmic" evidence="1">
    <location>
        <begin position="28"/>
        <end position="153"/>
    </location>
</feature>
<feature type="region of interest" description="Disordered" evidence="2">
    <location>
        <begin position="130"/>
        <end position="153"/>
    </location>
</feature>
<feature type="compositionally biased region" description="Polar residues" evidence="2">
    <location>
        <begin position="130"/>
        <end position="141"/>
    </location>
</feature>
<feature type="binding site" description="covalent" evidence="1">
    <location>
        <position position="121"/>
    </location>
    <ligand>
        <name>heme</name>
        <dbReference type="ChEBI" id="CHEBI:30413"/>
    </ligand>
</feature>
<feature type="binding site" description="axial binding residue" evidence="1">
    <location>
        <position position="125"/>
    </location>
    <ligand>
        <name>heme</name>
        <dbReference type="ChEBI" id="CHEBI:30413"/>
    </ligand>
    <ligandPart>
        <name>Fe</name>
        <dbReference type="ChEBI" id="CHEBI:18248"/>
    </ligandPart>
</feature>
<organism>
    <name type="scientific">Xylella fastidiosa (strain 9a5c)</name>
    <dbReference type="NCBI Taxonomy" id="160492"/>
    <lineage>
        <taxon>Bacteria</taxon>
        <taxon>Pseudomonadati</taxon>
        <taxon>Pseudomonadota</taxon>
        <taxon>Gammaproteobacteria</taxon>
        <taxon>Lysobacterales</taxon>
        <taxon>Lysobacteraceae</taxon>
        <taxon>Xylella</taxon>
    </lineage>
</organism>
<proteinExistence type="inferred from homology"/>
<comment type="function">
    <text evidence="1">Heme chaperone required for the biogenesis of c-type cytochromes. Transiently binds heme delivered by CcmC and transfers the heme to apo-cytochromes in a process facilitated by CcmF and CcmH.</text>
</comment>
<comment type="subcellular location">
    <subcellularLocation>
        <location evidence="1">Cell inner membrane</location>
        <topology evidence="1">Single-pass type II membrane protein</topology>
        <orientation evidence="1">Periplasmic side</orientation>
    </subcellularLocation>
</comment>
<comment type="similarity">
    <text evidence="1">Belongs to the CcmE/CycJ family.</text>
</comment>